<gene>
    <name type="primary">dacA</name>
    <name type="ordered locus">HI_0029</name>
</gene>
<reference key="1">
    <citation type="journal article" date="1995" name="Science">
        <title>Whole-genome random sequencing and assembly of Haemophilus influenzae Rd.</title>
        <authorList>
            <person name="Fleischmann R.D."/>
            <person name="Adams M.D."/>
            <person name="White O."/>
            <person name="Clayton R.A."/>
            <person name="Kirkness E.F."/>
            <person name="Kerlavage A.R."/>
            <person name="Bult C.J."/>
            <person name="Tomb J.-F."/>
            <person name="Dougherty B.A."/>
            <person name="Merrick J.M."/>
            <person name="McKenney K."/>
            <person name="Sutton G.G."/>
            <person name="FitzHugh W."/>
            <person name="Fields C.A."/>
            <person name="Gocayne J.D."/>
            <person name="Scott J.D."/>
            <person name="Shirley R."/>
            <person name="Liu L.-I."/>
            <person name="Glodek A."/>
            <person name="Kelley J.M."/>
            <person name="Weidman J.F."/>
            <person name="Phillips C.A."/>
            <person name="Spriggs T."/>
            <person name="Hedblom E."/>
            <person name="Cotton M.D."/>
            <person name="Utterback T.R."/>
            <person name="Hanna M.C."/>
            <person name="Nguyen D.T."/>
            <person name="Saudek D.M."/>
            <person name="Brandon R.C."/>
            <person name="Fine L.D."/>
            <person name="Fritchman J.L."/>
            <person name="Fuhrmann J.L."/>
            <person name="Geoghagen N.S.M."/>
            <person name="Gnehm C.L."/>
            <person name="McDonald L.A."/>
            <person name="Small K.V."/>
            <person name="Fraser C.M."/>
            <person name="Smith H.O."/>
            <person name="Venter J.C."/>
        </authorList>
    </citation>
    <scope>NUCLEOTIDE SEQUENCE [LARGE SCALE GENOMIC DNA]</scope>
    <source>
        <strain>ATCC 51907 / DSM 11121 / KW20 / Rd</strain>
    </source>
</reference>
<feature type="signal peptide" evidence="2">
    <location>
        <begin position="1"/>
        <end position="18"/>
    </location>
</feature>
<feature type="chain" id="PRO_0000027232" description="D-alanyl-D-alanine carboxypeptidase DacA">
    <location>
        <begin position="19"/>
        <end position="393"/>
    </location>
</feature>
<feature type="active site" description="Acyl-ester intermediate" evidence="1">
    <location>
        <position position="65"/>
    </location>
</feature>
<feature type="active site" description="Proton acceptor" evidence="1">
    <location>
        <position position="68"/>
    </location>
</feature>
<feature type="active site" evidence="1">
    <location>
        <position position="128"/>
    </location>
</feature>
<feature type="binding site" evidence="1">
    <location>
        <position position="231"/>
    </location>
    <ligand>
        <name>substrate</name>
    </ligand>
</feature>
<feature type="strand" evidence="4">
    <location>
        <begin position="38"/>
        <end position="45"/>
    </location>
</feature>
<feature type="turn" evidence="4">
    <location>
        <begin position="46"/>
        <end position="48"/>
    </location>
</feature>
<feature type="strand" evidence="4">
    <location>
        <begin position="51"/>
        <end position="56"/>
    </location>
</feature>
<feature type="helix" evidence="4">
    <location>
        <begin position="64"/>
        <end position="66"/>
    </location>
</feature>
<feature type="helix" evidence="4">
    <location>
        <begin position="67"/>
        <end position="80"/>
    </location>
</feature>
<feature type="strand" evidence="4">
    <location>
        <begin position="89"/>
        <end position="91"/>
    </location>
</feature>
<feature type="turn" evidence="4">
    <location>
        <begin position="94"/>
        <end position="96"/>
    </location>
</feature>
<feature type="helix" evidence="4">
    <location>
        <begin position="98"/>
        <end position="100"/>
    </location>
</feature>
<feature type="strand" evidence="4">
    <location>
        <begin position="114"/>
        <end position="116"/>
    </location>
</feature>
<feature type="helix" evidence="4">
    <location>
        <begin position="117"/>
        <end position="127"/>
    </location>
</feature>
<feature type="helix" evidence="4">
    <location>
        <begin position="130"/>
        <end position="141"/>
    </location>
</feature>
<feature type="helix" evidence="4">
    <location>
        <begin position="144"/>
        <end position="157"/>
    </location>
</feature>
<feature type="strand" evidence="4">
    <location>
        <begin position="166"/>
        <end position="169"/>
    </location>
</feature>
<feature type="helix" evidence="4">
    <location>
        <begin position="180"/>
        <end position="193"/>
    </location>
</feature>
<feature type="helix" evidence="4">
    <location>
        <begin position="195"/>
        <end position="198"/>
    </location>
</feature>
<feature type="helix" evidence="4">
    <location>
        <begin position="199"/>
        <end position="202"/>
    </location>
</feature>
<feature type="strand" evidence="4">
    <location>
        <begin position="205"/>
        <end position="208"/>
    </location>
</feature>
<feature type="strand" evidence="4">
    <location>
        <begin position="211"/>
        <end position="214"/>
    </location>
</feature>
<feature type="helix" evidence="4">
    <location>
        <begin position="218"/>
        <end position="221"/>
    </location>
</feature>
<feature type="strand" evidence="4">
    <location>
        <begin position="225"/>
        <end position="235"/>
    </location>
</feature>
<feature type="turn" evidence="4">
    <location>
        <begin position="236"/>
        <end position="238"/>
    </location>
</feature>
<feature type="strand" evidence="4">
    <location>
        <begin position="239"/>
        <end position="247"/>
    </location>
</feature>
<feature type="strand" evidence="4">
    <location>
        <begin position="253"/>
        <end position="263"/>
    </location>
</feature>
<feature type="helix" evidence="4">
    <location>
        <begin position="264"/>
        <end position="281"/>
    </location>
</feature>
<feature type="strand" evidence="4">
    <location>
        <begin position="282"/>
        <end position="288"/>
    </location>
</feature>
<feature type="strand" evidence="4">
    <location>
        <begin position="293"/>
        <end position="310"/>
    </location>
</feature>
<feature type="strand" evidence="4">
    <location>
        <begin position="315"/>
        <end position="320"/>
    </location>
</feature>
<feature type="turn" evidence="4">
    <location>
        <begin position="324"/>
        <end position="326"/>
    </location>
</feature>
<feature type="strand" evidence="4">
    <location>
        <begin position="328"/>
        <end position="340"/>
    </location>
</feature>
<feature type="strand" evidence="4">
    <location>
        <begin position="347"/>
        <end position="355"/>
    </location>
</feature>
<feature type="strand" evidence="4">
    <location>
        <begin position="358"/>
        <end position="367"/>
    </location>
</feature>
<accession>P44466</accession>
<evidence type="ECO:0000250" key="1"/>
<evidence type="ECO:0000255" key="2"/>
<evidence type="ECO:0000305" key="3"/>
<evidence type="ECO:0007829" key="4">
    <source>
        <dbReference type="PDB" id="3A3J"/>
    </source>
</evidence>
<proteinExistence type="evidence at protein level"/>
<keyword id="KW-0002">3D-structure</keyword>
<keyword id="KW-0121">Carboxypeptidase</keyword>
<keyword id="KW-0997">Cell inner membrane</keyword>
<keyword id="KW-1003">Cell membrane</keyword>
<keyword id="KW-0133">Cell shape</keyword>
<keyword id="KW-0961">Cell wall biogenesis/degradation</keyword>
<keyword id="KW-0378">Hydrolase</keyword>
<keyword id="KW-0472">Membrane</keyword>
<keyword id="KW-0573">Peptidoglycan synthesis</keyword>
<keyword id="KW-0645">Protease</keyword>
<keyword id="KW-1185">Reference proteome</keyword>
<keyword id="KW-0732">Signal</keyword>
<dbReference type="EC" id="3.4.16.4"/>
<dbReference type="EMBL" id="L42023">
    <property type="protein sequence ID" value="AAC21707.1"/>
    <property type="molecule type" value="Genomic_DNA"/>
</dbReference>
<dbReference type="PIR" id="I64043">
    <property type="entry name" value="I64043"/>
</dbReference>
<dbReference type="RefSeq" id="NP_438202.1">
    <property type="nucleotide sequence ID" value="NC_000907.1"/>
</dbReference>
<dbReference type="PDB" id="3A3J">
    <property type="method" value="X-ray"/>
    <property type="resolution" value="2.15 A"/>
    <property type="chains" value="A=30-373"/>
</dbReference>
<dbReference type="PDBsum" id="3A3J"/>
<dbReference type="SMR" id="P44466"/>
<dbReference type="STRING" id="71421.HI_0029"/>
<dbReference type="EnsemblBacteria" id="AAC21707">
    <property type="protein sequence ID" value="AAC21707"/>
    <property type="gene ID" value="HI_0029"/>
</dbReference>
<dbReference type="KEGG" id="hin:HI_0029"/>
<dbReference type="PATRIC" id="fig|71421.8.peg.29"/>
<dbReference type="eggNOG" id="COG1686">
    <property type="taxonomic scope" value="Bacteria"/>
</dbReference>
<dbReference type="HOGENOM" id="CLU_027070_8_1_6"/>
<dbReference type="OrthoDB" id="9795979at2"/>
<dbReference type="PhylomeDB" id="P44466"/>
<dbReference type="BioCyc" id="HINF71421:G1GJ1-29-MONOMER"/>
<dbReference type="UniPathway" id="UPA00219"/>
<dbReference type="EvolutionaryTrace" id="P44466"/>
<dbReference type="Proteomes" id="UP000000579">
    <property type="component" value="Chromosome"/>
</dbReference>
<dbReference type="GO" id="GO:0005886">
    <property type="term" value="C:plasma membrane"/>
    <property type="evidence" value="ECO:0007669"/>
    <property type="project" value="UniProtKB-SubCell"/>
</dbReference>
<dbReference type="GO" id="GO:0009002">
    <property type="term" value="F:serine-type D-Ala-D-Ala carboxypeptidase activity"/>
    <property type="evidence" value="ECO:0007669"/>
    <property type="project" value="UniProtKB-EC"/>
</dbReference>
<dbReference type="GO" id="GO:0071555">
    <property type="term" value="P:cell wall organization"/>
    <property type="evidence" value="ECO:0007669"/>
    <property type="project" value="UniProtKB-KW"/>
</dbReference>
<dbReference type="GO" id="GO:0009252">
    <property type="term" value="P:peptidoglycan biosynthetic process"/>
    <property type="evidence" value="ECO:0007669"/>
    <property type="project" value="UniProtKB-UniPathway"/>
</dbReference>
<dbReference type="GO" id="GO:0006508">
    <property type="term" value="P:proteolysis"/>
    <property type="evidence" value="ECO:0007669"/>
    <property type="project" value="UniProtKB-KW"/>
</dbReference>
<dbReference type="GO" id="GO:0008360">
    <property type="term" value="P:regulation of cell shape"/>
    <property type="evidence" value="ECO:0007669"/>
    <property type="project" value="UniProtKB-KW"/>
</dbReference>
<dbReference type="FunFam" id="3.40.710.10:FF:000001">
    <property type="entry name" value="D-alanyl-D-alanine serine-type carboxypeptidase"/>
    <property type="match status" value="1"/>
</dbReference>
<dbReference type="Gene3D" id="2.60.410.10">
    <property type="entry name" value="D-Ala-D-Ala carboxypeptidase, C-terminal domain"/>
    <property type="match status" value="1"/>
</dbReference>
<dbReference type="Gene3D" id="3.40.710.10">
    <property type="entry name" value="DD-peptidase/beta-lactamase superfamily"/>
    <property type="match status" value="1"/>
</dbReference>
<dbReference type="InterPro" id="IPR012338">
    <property type="entry name" value="Beta-lactam/transpept-like"/>
</dbReference>
<dbReference type="InterPro" id="IPR015956">
    <property type="entry name" value="Peniciliin-bd_prot_C_sf"/>
</dbReference>
<dbReference type="InterPro" id="IPR018044">
    <property type="entry name" value="Peptidase_S11"/>
</dbReference>
<dbReference type="InterPro" id="IPR012907">
    <property type="entry name" value="Peptidase_S11_C"/>
</dbReference>
<dbReference type="InterPro" id="IPR037167">
    <property type="entry name" value="Peptidase_S11_C_sf"/>
</dbReference>
<dbReference type="InterPro" id="IPR001967">
    <property type="entry name" value="Peptidase_S11_N"/>
</dbReference>
<dbReference type="PANTHER" id="PTHR21581">
    <property type="entry name" value="D-ALANYL-D-ALANINE CARBOXYPEPTIDASE"/>
    <property type="match status" value="1"/>
</dbReference>
<dbReference type="PANTHER" id="PTHR21581:SF6">
    <property type="entry name" value="TRAFFICKING PROTEIN PARTICLE COMPLEX SUBUNIT 12"/>
    <property type="match status" value="1"/>
</dbReference>
<dbReference type="Pfam" id="PF07943">
    <property type="entry name" value="PBP5_C"/>
    <property type="match status" value="1"/>
</dbReference>
<dbReference type="Pfam" id="PF00768">
    <property type="entry name" value="Peptidase_S11"/>
    <property type="match status" value="1"/>
</dbReference>
<dbReference type="PRINTS" id="PR00725">
    <property type="entry name" value="DADACBPTASE1"/>
</dbReference>
<dbReference type="SMART" id="SM00936">
    <property type="entry name" value="PBP5_C"/>
    <property type="match status" value="1"/>
</dbReference>
<dbReference type="SUPFAM" id="SSF56601">
    <property type="entry name" value="beta-lactamase/transpeptidase-like"/>
    <property type="match status" value="1"/>
</dbReference>
<dbReference type="SUPFAM" id="SSF69189">
    <property type="entry name" value="Penicillin-binding protein associated domain"/>
    <property type="match status" value="1"/>
</dbReference>
<protein>
    <recommendedName>
        <fullName>D-alanyl-D-alanine carboxypeptidase DacA</fullName>
        <shortName>DD-carboxypeptidase</shortName>
        <shortName>DD-peptidase</shortName>
        <ecNumber>3.4.16.4</ecNumber>
    </recommendedName>
    <alternativeName>
        <fullName>Penicillin-binding protein 5</fullName>
        <shortName>PBP-5</shortName>
    </alternativeName>
</protein>
<comment type="function">
    <text evidence="1">Removes C-terminal D-alanyl residues from sugar-peptide cell wall precursors.</text>
</comment>
<comment type="catalytic activity">
    <reaction>
        <text>Preferential cleavage: (Ac)2-L-Lys-D-Ala-|-D-Ala. Also transpeptidation of peptidyl-alanyl moieties that are N-acyl substituents of D-alanine.</text>
        <dbReference type="EC" id="3.4.16.4"/>
    </reaction>
</comment>
<comment type="pathway">
    <text>Cell wall biogenesis; peptidoglycan biosynthesis.</text>
</comment>
<comment type="subcellular location">
    <subcellularLocation>
        <location evidence="1">Cell inner membrane</location>
        <topology evidence="1">Peripheral membrane protein</topology>
    </subcellularLocation>
    <text evidence="1">N-terminal lies in the periplasmic space.</text>
</comment>
<comment type="similarity">
    <text evidence="3">Belongs to the peptidase S11 family.</text>
</comment>
<organism>
    <name type="scientific">Haemophilus influenzae (strain ATCC 51907 / DSM 11121 / KW20 / Rd)</name>
    <dbReference type="NCBI Taxonomy" id="71421"/>
    <lineage>
        <taxon>Bacteria</taxon>
        <taxon>Pseudomonadati</taxon>
        <taxon>Pseudomonadota</taxon>
        <taxon>Gammaproteobacteria</taxon>
        <taxon>Pasteurellales</taxon>
        <taxon>Pasteurellaceae</taxon>
        <taxon>Haemophilus</taxon>
    </lineage>
</organism>
<name>DACA_HAEIN</name>
<sequence length="393" mass="43414">MLKRTTKIAFLSSFVALSAFSVSAEDMQFGVTPPQITAQTYVLMDYNSGAILTALNPDQRQYPASLTKMMTSYVVGVALKQGKIHNTDMVTIGESAWGRNFPDSSKMFLDLNTQVSVADLNRGVIVVSGNDATVALAEHISGNVPNFVETMNKYVQQFGLKNTNFTTPHGLDDPNQYSSARDMAIIGAHIIRDLPEEYKIYSEKNFTFNKIKQANRNGLLWDKTINVDGMKTGHTSQAGYNLVASATTSNNMRLISVVMGVPTYKGREVESKKLLQWGFANFETFKTLEAGKEISEQRVYYGDKNSVKLGALMDHFITIPKGKQSEVKARYELADKNLQAPLVKGQVIGKVVYQLDGKDIASANLQVMNDVGEAGIFGKLWDWLVLTVKGLFS</sequence>